<keyword id="KW-0808">Transferase</keyword>
<organism>
    <name type="scientific">Clonostachys rogersoniana</name>
    <dbReference type="NCBI Taxonomy" id="122658"/>
    <lineage>
        <taxon>Eukaryota</taxon>
        <taxon>Fungi</taxon>
        <taxon>Dikarya</taxon>
        <taxon>Ascomycota</taxon>
        <taxon>Pezizomycotina</taxon>
        <taxon>Sordariomycetes</taxon>
        <taxon>Hypocreomycetidae</taxon>
        <taxon>Hypocreales</taxon>
        <taxon>Bionectriaceae</taxon>
        <taxon>Clonostachys</taxon>
    </lineage>
</organism>
<comment type="function">
    <text evidence="4 8">Glutathione S-transferase; part of the gene cluster that mediates the biosynthesis of 11'-deoxyverticillin A, one of the dimeric epipolythiodioxopiperazines (ETPs) from the verticillin family that act as mycotoxins (PubMed:28376389). 11'-deoxyverticillin A is required for normal conidiation (PubMed:28376389). The nonribosomal peptide synthetase verP is speculated to be responsible for condensation of amino acids to form the carbon skeleton of verticillin, whereas the cluster-specific tailoring enzymes are involved in further modifications leading to the production of 11'-deoxyverticillin A (Probable).</text>
</comment>
<comment type="catalytic activity">
    <reaction evidence="1">
        <text>RX + glutathione = an S-substituted glutathione + a halide anion + H(+)</text>
        <dbReference type="Rhea" id="RHEA:16437"/>
        <dbReference type="ChEBI" id="CHEBI:15378"/>
        <dbReference type="ChEBI" id="CHEBI:16042"/>
        <dbReference type="ChEBI" id="CHEBI:17792"/>
        <dbReference type="ChEBI" id="CHEBI:57925"/>
        <dbReference type="ChEBI" id="CHEBI:90779"/>
        <dbReference type="EC" id="2.5.1.18"/>
    </reaction>
</comment>
<comment type="pathway">
    <text evidence="4">Mycotoxin biosynthesis.</text>
</comment>
<comment type="induction">
    <text evidence="5">Expression is regulated by the cluster-specific regulator verZ.</text>
</comment>
<comment type="disruption phenotype">
    <text evidence="4">Completely abolishes the 11'-deoxyverticillin A production.</text>
</comment>
<comment type="similarity">
    <text evidence="7">Belongs to the GST superfamily.</text>
</comment>
<dbReference type="EC" id="2.5.1.18" evidence="1"/>
<dbReference type="EMBL" id="KY359203">
    <property type="protein sequence ID" value="AQZ42166.1"/>
    <property type="molecule type" value="Genomic_DNA"/>
</dbReference>
<dbReference type="SMR" id="A0A1U9YI21"/>
<dbReference type="GO" id="GO:0004364">
    <property type="term" value="F:glutathione transferase activity"/>
    <property type="evidence" value="ECO:0007669"/>
    <property type="project" value="UniProtKB-EC"/>
</dbReference>
<dbReference type="Gene3D" id="1.20.1050.130">
    <property type="match status" value="1"/>
</dbReference>
<dbReference type="InterPro" id="IPR010987">
    <property type="entry name" value="Glutathione-S-Trfase_C-like"/>
</dbReference>
<dbReference type="InterPro" id="IPR036282">
    <property type="entry name" value="Glutathione-S-Trfase_C_sf"/>
</dbReference>
<dbReference type="InterPro" id="IPR040079">
    <property type="entry name" value="Glutathione_S-Trfase"/>
</dbReference>
<dbReference type="InterPro" id="IPR004045">
    <property type="entry name" value="Glutathione_S-Trfase_N"/>
</dbReference>
<dbReference type="InterPro" id="IPR004046">
    <property type="entry name" value="GST_C"/>
</dbReference>
<dbReference type="InterPro" id="IPR036249">
    <property type="entry name" value="Thioredoxin-like_sf"/>
</dbReference>
<dbReference type="PANTHER" id="PTHR44051">
    <property type="entry name" value="GLUTATHIONE S-TRANSFERASE-RELATED"/>
    <property type="match status" value="1"/>
</dbReference>
<dbReference type="PANTHER" id="PTHR44051:SF20">
    <property type="entry name" value="GLUTATHIONE TRANSFERASE 1 (EUROFUNG)"/>
    <property type="match status" value="1"/>
</dbReference>
<dbReference type="Pfam" id="PF00043">
    <property type="entry name" value="GST_C"/>
    <property type="match status" value="1"/>
</dbReference>
<dbReference type="Pfam" id="PF13409">
    <property type="entry name" value="GST_N_2"/>
    <property type="match status" value="1"/>
</dbReference>
<dbReference type="SFLD" id="SFLDS00019">
    <property type="entry name" value="Glutathione_Transferase_(cytos"/>
    <property type="match status" value="1"/>
</dbReference>
<dbReference type="SUPFAM" id="SSF47616">
    <property type="entry name" value="GST C-terminal domain-like"/>
    <property type="match status" value="1"/>
</dbReference>
<dbReference type="SUPFAM" id="SSF52833">
    <property type="entry name" value="Thioredoxin-like"/>
    <property type="match status" value="1"/>
</dbReference>
<dbReference type="PROSITE" id="PS50405">
    <property type="entry name" value="GST_CTER"/>
    <property type="match status" value="1"/>
</dbReference>
<dbReference type="PROSITE" id="PS50404">
    <property type="entry name" value="GST_NTER"/>
    <property type="match status" value="1"/>
</dbReference>
<protein>
    <recommendedName>
        <fullName evidence="1">Glutathione S-transferase verG</fullName>
        <ecNumber evidence="1">2.5.1.18</ecNumber>
    </recommendedName>
    <alternativeName>
        <fullName evidence="6">Verticillin biosynthesis cluster protein G</fullName>
    </alternativeName>
</protein>
<name>VERG_CLORO</name>
<feature type="chain" id="PRO_0000450163" description="Glutathione S-transferase verG">
    <location>
        <begin position="1"/>
        <end position="239"/>
    </location>
</feature>
<feature type="domain" description="GST N-terminal" evidence="2">
    <location>
        <begin position="18"/>
        <end position="101"/>
    </location>
</feature>
<feature type="domain" description="GST C-terminal" evidence="3">
    <location>
        <begin position="107"/>
        <end position="237"/>
    </location>
</feature>
<sequence>MPINKFSARSLDNDVPNKPLIFVMEGRYQNWIKPIMLLECLEIDYDAACIDGPTTRTDWFTRLHPQRYVPAMIDVEDGQRVSSWDSSQMLQYLSNKYDAKRMWNGHNAAENLEICNWLTFETASLGPTAKYWVWYALRQGEEQNPKAQQKMYNDLRVQYSILDKHLAQPGQNWVGLKDRPTIADLAIYPFADDPTMARMGIDKKDFPSLKAWSEALSKVPGVAKAYAELDSRKEIAIGA</sequence>
<gene>
    <name evidence="6" type="primary">verG</name>
</gene>
<proteinExistence type="evidence at transcript level"/>
<evidence type="ECO:0000250" key="1">
    <source>
        <dbReference type="UniProtKB" id="A4GYZ0"/>
    </source>
</evidence>
<evidence type="ECO:0000255" key="2">
    <source>
        <dbReference type="PROSITE-ProRule" id="PRU00684"/>
    </source>
</evidence>
<evidence type="ECO:0000255" key="3">
    <source>
        <dbReference type="PROSITE-ProRule" id="PRU00685"/>
    </source>
</evidence>
<evidence type="ECO:0000269" key="4">
    <source>
    </source>
</evidence>
<evidence type="ECO:0000269" key="5">
    <source>
    </source>
</evidence>
<evidence type="ECO:0000303" key="6">
    <source>
    </source>
</evidence>
<evidence type="ECO:0000305" key="7"/>
<evidence type="ECO:0000305" key="8">
    <source>
    </source>
</evidence>
<accession>A0A1U9YI21</accession>
<reference key="1">
    <citation type="journal article" date="2017" name="Fungal Genet. Biol.">
        <title>Identification and characterization of the verticillin biosynthetic gene cluster in Clonostachys rogersoniana.</title>
        <authorList>
            <person name="Wang Y."/>
            <person name="Hu P."/>
            <person name="Pan Y."/>
            <person name="Zhu Y."/>
            <person name="Liu X."/>
            <person name="Che Y."/>
            <person name="Liu G."/>
        </authorList>
    </citation>
    <scope>NUCLEOTIDE SEQUENCE [GENOMIC DNA]</scope>
    <scope>FUNCTION</scope>
    <scope>DISRUPTION PHENOTYPE</scope>
    <scope>PATHWAY</scope>
    <source>
        <strain>XZC04-CC-302</strain>
    </source>
</reference>
<reference key="2">
    <citation type="journal article" date="2017" name="Microbiology">
        <title>VerZ, a Zn(II)2Cys6 DNA-binding protein, regulates the biosynthesis of verticillin in Clonostachys rogersoniana.</title>
        <authorList>
            <person name="Guo Z."/>
            <person name="Hao T."/>
            <person name="Wang Y."/>
            <person name="Pan Y."/>
            <person name="Ren F."/>
            <person name="Liu X."/>
            <person name="Che Y."/>
            <person name="Liu G."/>
        </authorList>
    </citation>
    <scope>INDUCTION</scope>
</reference>